<sequence>MGVELAFPKVVGKQVYGSLYDCDENVLKDTKRLEQIIKEAADVGNMNILDIKSWKIGEGVSVVAIILESHITIHTWPEYKFATVDVYSCGPHTSPLKAFNYIVEKLGAKKYTINEADRSSEF</sequence>
<reference key="1">
    <citation type="journal article" date="2009" name="Proc. Natl. Acad. Sci. U.S.A.">
        <title>Biogeography of the Sulfolobus islandicus pan-genome.</title>
        <authorList>
            <person name="Reno M.L."/>
            <person name="Held N.L."/>
            <person name="Fields C.J."/>
            <person name="Burke P.V."/>
            <person name="Whitaker R.J."/>
        </authorList>
    </citation>
    <scope>NUCLEOTIDE SEQUENCE [LARGE SCALE GENOMIC DNA]</scope>
    <source>
        <strain>L.S.2.15 / Lassen #1</strain>
    </source>
</reference>
<organism>
    <name type="scientific">Saccharolobus islandicus (strain L.S.2.15 / Lassen #1)</name>
    <name type="common">Sulfolobus islandicus</name>
    <dbReference type="NCBI Taxonomy" id="429572"/>
    <lineage>
        <taxon>Archaea</taxon>
        <taxon>Thermoproteota</taxon>
        <taxon>Thermoprotei</taxon>
        <taxon>Sulfolobales</taxon>
        <taxon>Sulfolobaceae</taxon>
        <taxon>Saccharolobus</taxon>
    </lineage>
</organism>
<proteinExistence type="inferred from homology"/>
<accession>C3MQJ5</accession>
<evidence type="ECO:0000255" key="1">
    <source>
        <dbReference type="HAMAP-Rule" id="MF_00464"/>
    </source>
</evidence>
<dbReference type="EC" id="4.1.1.50" evidence="1"/>
<dbReference type="EMBL" id="CP001399">
    <property type="protein sequence ID" value="ACP35658.1"/>
    <property type="molecule type" value="Genomic_DNA"/>
</dbReference>
<dbReference type="SMR" id="C3MQJ5"/>
<dbReference type="KEGG" id="sis:LS215_1654"/>
<dbReference type="HOGENOM" id="CLU_125470_2_1_2"/>
<dbReference type="UniPathway" id="UPA00331">
    <property type="reaction ID" value="UER00451"/>
</dbReference>
<dbReference type="Proteomes" id="UP000001747">
    <property type="component" value="Chromosome"/>
</dbReference>
<dbReference type="GO" id="GO:0005829">
    <property type="term" value="C:cytosol"/>
    <property type="evidence" value="ECO:0007669"/>
    <property type="project" value="TreeGrafter"/>
</dbReference>
<dbReference type="GO" id="GO:0004014">
    <property type="term" value="F:adenosylmethionine decarboxylase activity"/>
    <property type="evidence" value="ECO:0007669"/>
    <property type="project" value="UniProtKB-UniRule"/>
</dbReference>
<dbReference type="GO" id="GO:0008295">
    <property type="term" value="P:spermidine biosynthetic process"/>
    <property type="evidence" value="ECO:0007669"/>
    <property type="project" value="UniProtKB-UniRule"/>
</dbReference>
<dbReference type="FunFam" id="3.60.90.10:FF:000005">
    <property type="entry name" value="Arginine decarboxylase proenzyme"/>
    <property type="match status" value="1"/>
</dbReference>
<dbReference type="Gene3D" id="3.60.90.10">
    <property type="entry name" value="S-adenosylmethionine decarboxylase"/>
    <property type="match status" value="1"/>
</dbReference>
<dbReference type="HAMAP" id="MF_00464">
    <property type="entry name" value="AdoMetDC_1"/>
    <property type="match status" value="1"/>
</dbReference>
<dbReference type="InterPro" id="IPR003826">
    <property type="entry name" value="AdoMetDC_fam_prok"/>
</dbReference>
<dbReference type="InterPro" id="IPR016067">
    <property type="entry name" value="S-AdoMet_deCO2ase_core"/>
</dbReference>
<dbReference type="InterPro" id="IPR017716">
    <property type="entry name" value="S-AdoMet_deCOase_pro-enz"/>
</dbReference>
<dbReference type="NCBIfam" id="TIGR03330">
    <property type="entry name" value="SAM_DCase_Bsu"/>
    <property type="match status" value="1"/>
</dbReference>
<dbReference type="PANTHER" id="PTHR33866">
    <property type="entry name" value="S-ADENOSYLMETHIONINE DECARBOXYLASE PROENZYME"/>
    <property type="match status" value="1"/>
</dbReference>
<dbReference type="PANTHER" id="PTHR33866:SF2">
    <property type="entry name" value="S-ADENOSYLMETHIONINE DECARBOXYLASE PROENZYME"/>
    <property type="match status" value="1"/>
</dbReference>
<dbReference type="Pfam" id="PF02675">
    <property type="entry name" value="AdoMet_dc"/>
    <property type="match status" value="1"/>
</dbReference>
<dbReference type="SUPFAM" id="SSF56276">
    <property type="entry name" value="S-adenosylmethionine decarboxylase"/>
    <property type="match status" value="1"/>
</dbReference>
<feature type="chain" id="PRO_1000206312" description="S-adenosylmethionine decarboxylase beta chain" evidence="1">
    <location>
        <begin position="1"/>
        <end position="68"/>
    </location>
</feature>
<feature type="chain" id="PRO_1000206313" description="S-adenosylmethionine decarboxylase alpha chain" evidence="1">
    <location>
        <begin position="69"/>
        <end position="122"/>
    </location>
</feature>
<feature type="active site" description="Schiff-base intermediate with substrate; via pyruvic acid" evidence="1">
    <location>
        <position position="69"/>
    </location>
</feature>
<feature type="active site" description="Proton acceptor; for processing activity" evidence="1">
    <location>
        <position position="74"/>
    </location>
</feature>
<feature type="active site" description="Proton donor; for catalytic activity" evidence="1">
    <location>
        <position position="89"/>
    </location>
</feature>
<feature type="site" description="Cleavage (non-hydrolytic); by autolysis" evidence="1">
    <location>
        <begin position="68"/>
        <end position="69"/>
    </location>
</feature>
<feature type="modified residue" description="Pyruvic acid (Ser); by autocatalysis" evidence="1">
    <location>
        <position position="69"/>
    </location>
</feature>
<protein>
    <recommendedName>
        <fullName evidence="1">S-adenosylmethionine decarboxylase proenzyme</fullName>
        <shortName evidence="1">AdoMetDC</shortName>
        <shortName evidence="1">SAMDC</shortName>
        <ecNumber evidence="1">4.1.1.50</ecNumber>
    </recommendedName>
    <component>
        <recommendedName>
            <fullName evidence="1">S-adenosylmethionine decarboxylase beta chain</fullName>
        </recommendedName>
    </component>
    <component>
        <recommendedName>
            <fullName evidence="1">S-adenosylmethionine decarboxylase alpha chain</fullName>
        </recommendedName>
    </component>
</protein>
<keyword id="KW-0068">Autocatalytic cleavage</keyword>
<keyword id="KW-0210">Decarboxylase</keyword>
<keyword id="KW-0456">Lyase</keyword>
<keyword id="KW-0620">Polyamine biosynthesis</keyword>
<keyword id="KW-0670">Pyruvate</keyword>
<keyword id="KW-0949">S-adenosyl-L-methionine</keyword>
<keyword id="KW-0704">Schiff base</keyword>
<keyword id="KW-0745">Spermidine biosynthesis</keyword>
<keyword id="KW-0865">Zymogen</keyword>
<name>SPEH_SACI2</name>
<gene>
    <name evidence="1" type="primary">speH</name>
    <name type="ordered locus">LS215_1654</name>
</gene>
<comment type="function">
    <text evidence="1">Catalyzes the decarboxylation of S-adenosylmethionine to S-adenosylmethioninamine (dcAdoMet), the propylamine donor required for the synthesis of the polyamines spermine and spermidine from the diamine putrescine.</text>
</comment>
<comment type="catalytic activity">
    <reaction evidence="1">
        <text>S-adenosyl-L-methionine + H(+) = S-adenosyl 3-(methylsulfanyl)propylamine + CO2</text>
        <dbReference type="Rhea" id="RHEA:15981"/>
        <dbReference type="ChEBI" id="CHEBI:15378"/>
        <dbReference type="ChEBI" id="CHEBI:16526"/>
        <dbReference type="ChEBI" id="CHEBI:57443"/>
        <dbReference type="ChEBI" id="CHEBI:59789"/>
        <dbReference type="EC" id="4.1.1.50"/>
    </reaction>
</comment>
<comment type="cofactor">
    <cofactor evidence="1">
        <name>pyruvate</name>
        <dbReference type="ChEBI" id="CHEBI:15361"/>
    </cofactor>
    <text evidence="1">Binds 1 pyruvoyl group covalently per subunit.</text>
</comment>
<comment type="pathway">
    <text evidence="1">Amine and polyamine biosynthesis; S-adenosylmethioninamine biosynthesis; S-adenosylmethioninamine from S-adenosyl-L-methionine: step 1/1.</text>
</comment>
<comment type="subunit">
    <text evidence="1">Heterotetramer of two alpha and two beta chains arranged as a dimer of alpha/beta heterodimers.</text>
</comment>
<comment type="PTM">
    <text evidence="1">Is synthesized initially as an inactive proenzyme. Formation of the active enzyme involves a self-maturation process in which the active site pyruvoyl group is generated from an internal serine residue via an autocatalytic post-translational modification. Two non-identical subunits are generated from the proenzyme in this reaction, and the pyruvate is formed at the N-terminus of the alpha chain, which is derived from the carboxyl end of the proenzyme. The post-translation cleavage follows an unusual pathway, termed non-hydrolytic serinolysis, in which the side chain hydroxyl group of the serine supplies its oxygen atom to form the C-terminus of the beta chain, while the remainder of the serine residue undergoes an oxidative deamination to produce ammonia and the pyruvoyl group blocking the N-terminus of the alpha chain.</text>
</comment>
<comment type="similarity">
    <text evidence="1">Belongs to the prokaryotic AdoMetDC family. Type 1 subfamily.</text>
</comment>